<name>FBK21_ARATH</name>
<organism>
    <name type="scientific">Arabidopsis thaliana</name>
    <name type="common">Mouse-ear cress</name>
    <dbReference type="NCBI Taxonomy" id="3702"/>
    <lineage>
        <taxon>Eukaryota</taxon>
        <taxon>Viridiplantae</taxon>
        <taxon>Streptophyta</taxon>
        <taxon>Embryophyta</taxon>
        <taxon>Tracheophyta</taxon>
        <taxon>Spermatophyta</taxon>
        <taxon>Magnoliopsida</taxon>
        <taxon>eudicotyledons</taxon>
        <taxon>Gunneridae</taxon>
        <taxon>Pentapetalae</taxon>
        <taxon>rosids</taxon>
        <taxon>malvids</taxon>
        <taxon>Brassicales</taxon>
        <taxon>Brassicaceae</taxon>
        <taxon>Camelineae</taxon>
        <taxon>Arabidopsis</taxon>
    </lineage>
</organism>
<sequence length="478" mass="53167">MAAESTRNSSPPSTSQSSSPIINLPDDHLLTILLLLPVDSILSFSMTCKRYKSLACSDSLWEALCEREWGPTSVDALKLSSLRDGFSWMLMFQRVYKMDSVCCHKISDPDDDDEESSSFPIPRASHSLNFVNDHLVLFGGGCQGGRHLDDTWTSYVDKSNQSILKWKKVKSGTPSGRFGHTCIVIGEYLLLFGGINDRGERLNDTWIGQVFCHEGLSWKLLNVGSLQRPRPPPRGAHSACCIAEKKMVVHGGIGLNGVRLGDTWILELSEDFSSGTWHMVESPQLPPPRSGHTLTCIRENQVVLFGGRGLGYDVLDDVWILDIQEPCEEKWIQIFYDFQDVPEYASLPRVGHSATLVLGGRILIYGGEDSYRHRKDDFWVLDVKTIPSSGLKPQGLSLNGSSVWKKLDRISYGPKSRSFHRACADCSGRFLYVFGGMVDGLLQPAASSGLRFDGELFMVELVLGFSDLDHQQRPGKSM</sequence>
<keyword id="KW-0880">Kelch repeat</keyword>
<keyword id="KW-1185">Reference proteome</keyword>
<keyword id="KW-0677">Repeat</keyword>
<proteinExistence type="evidence at transcript level"/>
<gene>
    <name type="ordered locus">At1g51550</name>
    <name type="ORF">F5D21.4</name>
</gene>
<accession>Q9C8K7</accession>
<accession>Q681W1</accession>
<accession>Q8LAD5</accession>
<dbReference type="EMBL" id="AC024261">
    <property type="protein sequence ID" value="AAG52632.1"/>
    <property type="molecule type" value="Genomic_DNA"/>
</dbReference>
<dbReference type="EMBL" id="CP002684">
    <property type="protein sequence ID" value="AEE32682.1"/>
    <property type="molecule type" value="Genomic_DNA"/>
</dbReference>
<dbReference type="EMBL" id="AY087885">
    <property type="protein sequence ID" value="AAM65437.1"/>
    <property type="molecule type" value="mRNA"/>
</dbReference>
<dbReference type="EMBL" id="BT029162">
    <property type="protein sequence ID" value="ABJ17097.1"/>
    <property type="molecule type" value="mRNA"/>
</dbReference>
<dbReference type="EMBL" id="AK175506">
    <property type="protein sequence ID" value="BAD43269.1"/>
    <property type="status" value="ALT_INIT"/>
    <property type="molecule type" value="mRNA"/>
</dbReference>
<dbReference type="EMBL" id="AK175424">
    <property type="protein sequence ID" value="BAD43187.1"/>
    <property type="status" value="ALT_INIT"/>
    <property type="molecule type" value="mRNA"/>
</dbReference>
<dbReference type="PIR" id="A96554">
    <property type="entry name" value="A96554"/>
</dbReference>
<dbReference type="RefSeq" id="NP_564592.1">
    <property type="nucleotide sequence ID" value="NM_104033.6"/>
</dbReference>
<dbReference type="SMR" id="Q9C8K7"/>
<dbReference type="BioGRID" id="26805">
    <property type="interactions" value="9"/>
</dbReference>
<dbReference type="STRING" id="3702.Q9C8K7"/>
<dbReference type="PaxDb" id="3702-AT1G51550.1"/>
<dbReference type="ProteomicsDB" id="222421"/>
<dbReference type="EnsemblPlants" id="AT1G51550.1">
    <property type="protein sequence ID" value="AT1G51550.1"/>
    <property type="gene ID" value="AT1G51550"/>
</dbReference>
<dbReference type="GeneID" id="841580"/>
<dbReference type="Gramene" id="AT1G51550.1">
    <property type="protein sequence ID" value="AT1G51550.1"/>
    <property type="gene ID" value="AT1G51550"/>
</dbReference>
<dbReference type="KEGG" id="ath:AT1G51550"/>
<dbReference type="Araport" id="AT1G51550"/>
<dbReference type="TAIR" id="AT1G51550"/>
<dbReference type="eggNOG" id="KOG0379">
    <property type="taxonomic scope" value="Eukaryota"/>
</dbReference>
<dbReference type="HOGENOM" id="CLU_030848_1_0_1"/>
<dbReference type="InParanoid" id="Q9C8K7"/>
<dbReference type="OMA" id="YRHRKND"/>
<dbReference type="OrthoDB" id="10251809at2759"/>
<dbReference type="PhylomeDB" id="Q9C8K7"/>
<dbReference type="PRO" id="PR:Q9C8K7"/>
<dbReference type="Proteomes" id="UP000006548">
    <property type="component" value="Chromosome 1"/>
</dbReference>
<dbReference type="ExpressionAtlas" id="Q9C8K7">
    <property type="expression patterns" value="baseline and differential"/>
</dbReference>
<dbReference type="FunFam" id="1.20.1280.50:FF:000099">
    <property type="entry name" value="F-box/kelch-repeat protein At1g51550"/>
    <property type="match status" value="1"/>
</dbReference>
<dbReference type="FunFam" id="2.120.10.80:FF:000105">
    <property type="entry name" value="F-box/kelch-repeat protein At1g51550"/>
    <property type="match status" value="1"/>
</dbReference>
<dbReference type="Gene3D" id="1.20.1280.50">
    <property type="match status" value="1"/>
</dbReference>
<dbReference type="Gene3D" id="2.120.10.80">
    <property type="entry name" value="Kelch-type beta propeller"/>
    <property type="match status" value="2"/>
</dbReference>
<dbReference type="InterPro" id="IPR036047">
    <property type="entry name" value="F-box-like_dom_sf"/>
</dbReference>
<dbReference type="InterPro" id="IPR001810">
    <property type="entry name" value="F-box_dom"/>
</dbReference>
<dbReference type="InterPro" id="IPR015915">
    <property type="entry name" value="Kelch-typ_b-propeller"/>
</dbReference>
<dbReference type="PANTHER" id="PTHR46175">
    <property type="entry name" value="BACTERIOOPSIN TRANSCRIPTIONAL ACTIVATOR"/>
    <property type="match status" value="1"/>
</dbReference>
<dbReference type="PANTHER" id="PTHR46175:SF4">
    <property type="entry name" value="BACTERIOOPSIN TRANSCRIPTIONAL ACTIVATOR"/>
    <property type="match status" value="1"/>
</dbReference>
<dbReference type="Pfam" id="PF12937">
    <property type="entry name" value="F-box-like"/>
    <property type="match status" value="1"/>
</dbReference>
<dbReference type="Pfam" id="PF24681">
    <property type="entry name" value="Kelch_KLHDC2_KLHL20_DRC7"/>
    <property type="match status" value="1"/>
</dbReference>
<dbReference type="SUPFAM" id="SSF81383">
    <property type="entry name" value="F-box domain"/>
    <property type="match status" value="1"/>
</dbReference>
<dbReference type="SUPFAM" id="SSF117281">
    <property type="entry name" value="Kelch motif"/>
    <property type="match status" value="1"/>
</dbReference>
<dbReference type="PROSITE" id="PS50181">
    <property type="entry name" value="FBOX"/>
    <property type="match status" value="1"/>
</dbReference>
<reference key="1">
    <citation type="journal article" date="2000" name="Nature">
        <title>Sequence and analysis of chromosome 1 of the plant Arabidopsis thaliana.</title>
        <authorList>
            <person name="Theologis A."/>
            <person name="Ecker J.R."/>
            <person name="Palm C.J."/>
            <person name="Federspiel N.A."/>
            <person name="Kaul S."/>
            <person name="White O."/>
            <person name="Alonso J."/>
            <person name="Altafi H."/>
            <person name="Araujo R."/>
            <person name="Bowman C.L."/>
            <person name="Brooks S.Y."/>
            <person name="Buehler E."/>
            <person name="Chan A."/>
            <person name="Chao Q."/>
            <person name="Chen H."/>
            <person name="Cheuk R.F."/>
            <person name="Chin C.W."/>
            <person name="Chung M.K."/>
            <person name="Conn L."/>
            <person name="Conway A.B."/>
            <person name="Conway A.R."/>
            <person name="Creasy T.H."/>
            <person name="Dewar K."/>
            <person name="Dunn P."/>
            <person name="Etgu P."/>
            <person name="Feldblyum T.V."/>
            <person name="Feng J.-D."/>
            <person name="Fong B."/>
            <person name="Fujii C.Y."/>
            <person name="Gill J.E."/>
            <person name="Goldsmith A.D."/>
            <person name="Haas B."/>
            <person name="Hansen N.F."/>
            <person name="Hughes B."/>
            <person name="Huizar L."/>
            <person name="Hunter J.L."/>
            <person name="Jenkins J."/>
            <person name="Johnson-Hopson C."/>
            <person name="Khan S."/>
            <person name="Khaykin E."/>
            <person name="Kim C.J."/>
            <person name="Koo H.L."/>
            <person name="Kremenetskaia I."/>
            <person name="Kurtz D.B."/>
            <person name="Kwan A."/>
            <person name="Lam B."/>
            <person name="Langin-Hooper S."/>
            <person name="Lee A."/>
            <person name="Lee J.M."/>
            <person name="Lenz C.A."/>
            <person name="Li J.H."/>
            <person name="Li Y.-P."/>
            <person name="Lin X."/>
            <person name="Liu S.X."/>
            <person name="Liu Z.A."/>
            <person name="Luros J.S."/>
            <person name="Maiti R."/>
            <person name="Marziali A."/>
            <person name="Militscher J."/>
            <person name="Miranda M."/>
            <person name="Nguyen M."/>
            <person name="Nierman W.C."/>
            <person name="Osborne B.I."/>
            <person name="Pai G."/>
            <person name="Peterson J."/>
            <person name="Pham P.K."/>
            <person name="Rizzo M."/>
            <person name="Rooney T."/>
            <person name="Rowley D."/>
            <person name="Sakano H."/>
            <person name="Salzberg S.L."/>
            <person name="Schwartz J.R."/>
            <person name="Shinn P."/>
            <person name="Southwick A.M."/>
            <person name="Sun H."/>
            <person name="Tallon L.J."/>
            <person name="Tambunga G."/>
            <person name="Toriumi M.J."/>
            <person name="Town C.D."/>
            <person name="Utterback T."/>
            <person name="Van Aken S."/>
            <person name="Vaysberg M."/>
            <person name="Vysotskaia V.S."/>
            <person name="Walker M."/>
            <person name="Wu D."/>
            <person name="Yu G."/>
            <person name="Fraser C.M."/>
            <person name="Venter J.C."/>
            <person name="Davis R.W."/>
        </authorList>
    </citation>
    <scope>NUCLEOTIDE SEQUENCE [LARGE SCALE GENOMIC DNA]</scope>
    <source>
        <strain>cv. Columbia</strain>
    </source>
</reference>
<reference key="2">
    <citation type="journal article" date="2017" name="Plant J.">
        <title>Araport11: a complete reannotation of the Arabidopsis thaliana reference genome.</title>
        <authorList>
            <person name="Cheng C.Y."/>
            <person name="Krishnakumar V."/>
            <person name="Chan A.P."/>
            <person name="Thibaud-Nissen F."/>
            <person name="Schobel S."/>
            <person name="Town C.D."/>
        </authorList>
    </citation>
    <scope>GENOME REANNOTATION</scope>
    <source>
        <strain>cv. Columbia</strain>
    </source>
</reference>
<reference key="3">
    <citation type="submission" date="2002-03" db="EMBL/GenBank/DDBJ databases">
        <title>Full-length cDNA from Arabidopsis thaliana.</title>
        <authorList>
            <person name="Brover V.V."/>
            <person name="Troukhan M.E."/>
            <person name="Alexandrov N.A."/>
            <person name="Lu Y.-P."/>
            <person name="Flavell R.B."/>
            <person name="Feldmann K.A."/>
        </authorList>
    </citation>
    <scope>NUCLEOTIDE SEQUENCE [LARGE SCALE MRNA]</scope>
</reference>
<reference key="4">
    <citation type="submission" date="2006-10" db="EMBL/GenBank/DDBJ databases">
        <title>Arabidopsis ORF clone.</title>
        <authorList>
            <person name="Bautista V.R."/>
            <person name="Kim C.J."/>
            <person name="Chen H."/>
            <person name="Quinitio C."/>
            <person name="Ecker J.R."/>
        </authorList>
    </citation>
    <scope>NUCLEOTIDE SEQUENCE [LARGE SCALE MRNA]</scope>
    <source>
        <strain>cv. Columbia</strain>
    </source>
</reference>
<reference key="5">
    <citation type="submission" date="2004-09" db="EMBL/GenBank/DDBJ databases">
        <title>Large-scale analysis of RIKEN Arabidopsis full-length (RAFL) cDNAs.</title>
        <authorList>
            <person name="Totoki Y."/>
            <person name="Seki M."/>
            <person name="Ishida J."/>
            <person name="Nakajima M."/>
            <person name="Enju A."/>
            <person name="Kamiya A."/>
            <person name="Narusaka M."/>
            <person name="Shin-i T."/>
            <person name="Nakagawa M."/>
            <person name="Sakamoto N."/>
            <person name="Oishi K."/>
            <person name="Kohara Y."/>
            <person name="Kobayashi M."/>
            <person name="Toyoda A."/>
            <person name="Sakaki Y."/>
            <person name="Sakurai T."/>
            <person name="Iida K."/>
            <person name="Akiyama K."/>
            <person name="Satou M."/>
            <person name="Toyoda T."/>
            <person name="Konagaya A."/>
            <person name="Carninci P."/>
            <person name="Kawai J."/>
            <person name="Hayashizaki Y."/>
            <person name="Shinozaki K."/>
        </authorList>
    </citation>
    <scope>NUCLEOTIDE SEQUENCE [LARGE SCALE MRNA] OF 3-478</scope>
    <source>
        <strain>cv. Columbia</strain>
    </source>
</reference>
<evidence type="ECO:0000255" key="1">
    <source>
        <dbReference type="PROSITE-ProRule" id="PRU00080"/>
    </source>
</evidence>
<evidence type="ECO:0000256" key="2">
    <source>
        <dbReference type="SAM" id="MobiDB-lite"/>
    </source>
</evidence>
<evidence type="ECO:0000305" key="3"/>
<feature type="chain" id="PRO_0000283181" description="F-box/kelch-repeat protein At1g51550">
    <location>
        <begin position="1"/>
        <end position="478"/>
    </location>
</feature>
<feature type="domain" description="F-box" evidence="1">
    <location>
        <begin position="18"/>
        <end position="64"/>
    </location>
</feature>
<feature type="repeat" description="Kelch 1">
    <location>
        <begin position="135"/>
        <end position="187"/>
    </location>
</feature>
<feature type="repeat" description="Kelch 2">
    <location>
        <begin position="246"/>
        <end position="299"/>
    </location>
</feature>
<feature type="region of interest" description="Disordered" evidence="2">
    <location>
        <begin position="1"/>
        <end position="20"/>
    </location>
</feature>
<feature type="compositionally biased region" description="Low complexity" evidence="2">
    <location>
        <begin position="9"/>
        <end position="20"/>
    </location>
</feature>
<feature type="sequence conflict" description="In Ref. 3; AAM65437." evidence="3" ref="3">
    <original>Q</original>
    <variation>R</variation>
    <location>
        <position position="16"/>
    </location>
</feature>
<feature type="sequence conflict" description="In Ref. 3; AAM65437." evidence="3" ref="3">
    <original>L</original>
    <variation>Q</variation>
    <location>
        <position position="255"/>
    </location>
</feature>
<protein>
    <recommendedName>
        <fullName>F-box/kelch-repeat protein At1g51550</fullName>
    </recommendedName>
</protein>
<comment type="sequence caution" evidence="3">
    <conflict type="erroneous initiation">
        <sequence resource="EMBL-CDS" id="BAD43187"/>
    </conflict>
</comment>
<comment type="sequence caution" evidence="3">
    <conflict type="erroneous initiation">
        <sequence resource="EMBL-CDS" id="BAD43269"/>
    </conflict>
</comment>